<name>CHLB_CROS5</name>
<protein>
    <recommendedName>
        <fullName evidence="1">Light-independent protochlorophyllide reductase subunit B</fullName>
        <shortName evidence="1">DPOR subunit B</shortName>
        <shortName evidence="1">LI-POR subunit B</shortName>
        <ecNumber evidence="1">1.3.7.7</ecNumber>
    </recommendedName>
</protein>
<gene>
    <name evidence="1" type="primary">chlB</name>
    <name type="ordered locus">cce_1954</name>
</gene>
<organism>
    <name type="scientific">Crocosphaera subtropica (strain ATCC 51142 / BH68)</name>
    <name type="common">Cyanothece sp. (strain ATCC 51142)</name>
    <dbReference type="NCBI Taxonomy" id="43989"/>
    <lineage>
        <taxon>Bacteria</taxon>
        <taxon>Bacillati</taxon>
        <taxon>Cyanobacteriota</taxon>
        <taxon>Cyanophyceae</taxon>
        <taxon>Oscillatoriophycideae</taxon>
        <taxon>Chroococcales</taxon>
        <taxon>Aphanothecaceae</taxon>
        <taxon>Crocosphaera</taxon>
        <taxon>Crocosphaera subtropica</taxon>
    </lineage>
</organism>
<sequence>MKLAYWMYAGPAHIGTLRIASSFKNVHAIMHAPLGDDYFNVMRSMLERERDFTPVTASIVDRNVLARGSQEKVVNNIVRKDGEERPDLIVLTPTCTSSILQEDLANFVERAQMDAQGDVLLADVNHYRYNELQAADRTLHQIVKFYLEKARKKEQLPQGKTENPSVNIIGISTLGFHNQHDCRELKQLMKDLGIEVNEVIPDGASVHNLKNLPKAWFNLVPYRELGLTTAQYLEEEFNLPYVDITPMGVVETARCIRKIQQIINEQGTNVDYEEYINNQTLYVSQAAWFSRSIDCQNLTGKKAVVFGDNTHAAAITKILAREMGIHVVLAGTYCKYDADWFKEQVSEYCDEVLISDDNGEIGDAIARIEPSAIFGTQMERHVGKRLDIPCGVIAAPIHIQNFPIGYKPFCGYEGTNQIADLVYNSFTLGMEDHLLEIFGGHDTKEVITKGISADSDLNWNKEAQAELNKVPGFVRGKVKRNTEKFARERGFSEISLEVMYAAKEAVGA</sequence>
<reference key="1">
    <citation type="journal article" date="2008" name="Proc. Natl. Acad. Sci. U.S.A.">
        <title>The genome of Cyanothece 51142, a unicellular diazotrophic cyanobacterium important in the marine nitrogen cycle.</title>
        <authorList>
            <person name="Welsh E.A."/>
            <person name="Liberton M."/>
            <person name="Stoeckel J."/>
            <person name="Loh T."/>
            <person name="Elvitigala T."/>
            <person name="Wang C."/>
            <person name="Wollam A."/>
            <person name="Fulton R.S."/>
            <person name="Clifton S.W."/>
            <person name="Jacobs J.M."/>
            <person name="Aurora R."/>
            <person name="Ghosh B.K."/>
            <person name="Sherman L.A."/>
            <person name="Smith R.D."/>
            <person name="Wilson R.K."/>
            <person name="Pakrasi H.B."/>
        </authorList>
    </citation>
    <scope>NUCLEOTIDE SEQUENCE [LARGE SCALE GENOMIC DNA]</scope>
    <source>
        <strain>ATCC 51142 / BH68</strain>
    </source>
</reference>
<keyword id="KW-0004">4Fe-4S</keyword>
<keyword id="KW-0067">ATP-binding</keyword>
<keyword id="KW-0149">Chlorophyll biosynthesis</keyword>
<keyword id="KW-0408">Iron</keyword>
<keyword id="KW-0411">Iron-sulfur</keyword>
<keyword id="KW-0479">Metal-binding</keyword>
<keyword id="KW-0547">Nucleotide-binding</keyword>
<keyword id="KW-0560">Oxidoreductase</keyword>
<keyword id="KW-0602">Photosynthesis</keyword>
<keyword id="KW-1185">Reference proteome</keyword>
<accession>B1X0L5</accession>
<dbReference type="EC" id="1.3.7.7" evidence="1"/>
<dbReference type="EMBL" id="CP000806">
    <property type="protein sequence ID" value="ACB51304.1"/>
    <property type="molecule type" value="Genomic_DNA"/>
</dbReference>
<dbReference type="RefSeq" id="WP_009545757.1">
    <property type="nucleotide sequence ID" value="NC_010546.1"/>
</dbReference>
<dbReference type="SMR" id="B1X0L5"/>
<dbReference type="STRING" id="43989.cce_1954"/>
<dbReference type="KEGG" id="cyt:cce_1954"/>
<dbReference type="eggNOG" id="COG2710">
    <property type="taxonomic scope" value="Bacteria"/>
</dbReference>
<dbReference type="HOGENOM" id="CLU_025470_0_0_3"/>
<dbReference type="OrthoDB" id="5717231at2"/>
<dbReference type="UniPathway" id="UPA00670"/>
<dbReference type="Proteomes" id="UP000001203">
    <property type="component" value="Chromosome circular"/>
</dbReference>
<dbReference type="GO" id="GO:0051539">
    <property type="term" value="F:4 iron, 4 sulfur cluster binding"/>
    <property type="evidence" value="ECO:0007669"/>
    <property type="project" value="UniProtKB-UniRule"/>
</dbReference>
<dbReference type="GO" id="GO:0005524">
    <property type="term" value="F:ATP binding"/>
    <property type="evidence" value="ECO:0007669"/>
    <property type="project" value="UniProtKB-UniRule"/>
</dbReference>
<dbReference type="GO" id="GO:0046872">
    <property type="term" value="F:metal ion binding"/>
    <property type="evidence" value="ECO:0007669"/>
    <property type="project" value="UniProtKB-KW"/>
</dbReference>
<dbReference type="GO" id="GO:0016730">
    <property type="term" value="F:oxidoreductase activity, acting on iron-sulfur proteins as donors"/>
    <property type="evidence" value="ECO:0007669"/>
    <property type="project" value="InterPro"/>
</dbReference>
<dbReference type="GO" id="GO:0016636">
    <property type="term" value="F:oxidoreductase activity, acting on the CH-CH group of donors, iron-sulfur protein as acceptor"/>
    <property type="evidence" value="ECO:0007669"/>
    <property type="project" value="UniProtKB-UniRule"/>
</dbReference>
<dbReference type="GO" id="GO:0036068">
    <property type="term" value="P:light-independent chlorophyll biosynthetic process"/>
    <property type="evidence" value="ECO:0007669"/>
    <property type="project" value="UniProtKB-UniRule"/>
</dbReference>
<dbReference type="GO" id="GO:0019685">
    <property type="term" value="P:photosynthesis, dark reaction"/>
    <property type="evidence" value="ECO:0007669"/>
    <property type="project" value="InterPro"/>
</dbReference>
<dbReference type="CDD" id="cd01981">
    <property type="entry name" value="Pchlide_reductase_B"/>
    <property type="match status" value="1"/>
</dbReference>
<dbReference type="Gene3D" id="1.20.89.20">
    <property type="match status" value="1"/>
</dbReference>
<dbReference type="Gene3D" id="3.40.50.1980">
    <property type="entry name" value="Nitrogenase molybdenum iron protein domain"/>
    <property type="match status" value="3"/>
</dbReference>
<dbReference type="Gene3D" id="1.10.8.550">
    <property type="entry name" value="Proto-chlorophyllide reductase 57 kD subunit B"/>
    <property type="match status" value="1"/>
</dbReference>
<dbReference type="HAMAP" id="MF_00353">
    <property type="entry name" value="ChlB_BchB"/>
    <property type="match status" value="1"/>
</dbReference>
<dbReference type="InterPro" id="IPR050152">
    <property type="entry name" value="ChlB/BchB/BchZ"/>
</dbReference>
<dbReference type="InterPro" id="IPR013580">
    <property type="entry name" value="LI-POR_suB-like_C"/>
</dbReference>
<dbReference type="InterPro" id="IPR000510">
    <property type="entry name" value="Nase/OxRdtase_comp1"/>
</dbReference>
<dbReference type="InterPro" id="IPR042298">
    <property type="entry name" value="P-CP_red_C"/>
</dbReference>
<dbReference type="InterPro" id="IPR005969">
    <property type="entry name" value="Protochl_reductB"/>
</dbReference>
<dbReference type="InterPro" id="IPR016209">
    <property type="entry name" value="Protochlorophyllide_Rdtase"/>
</dbReference>
<dbReference type="NCBIfam" id="TIGR01278">
    <property type="entry name" value="DPOR_BchB"/>
    <property type="match status" value="1"/>
</dbReference>
<dbReference type="PANTHER" id="PTHR33712">
    <property type="entry name" value="LIGHT-INDEPENDENT PROTOCHLOROPHYLLIDE REDUCTASE SUBUNIT B"/>
    <property type="match status" value="1"/>
</dbReference>
<dbReference type="PANTHER" id="PTHR33712:SF7">
    <property type="entry name" value="LIGHT-INDEPENDENT PROTOCHLOROPHYLLIDE REDUCTASE SUBUNIT B"/>
    <property type="match status" value="1"/>
</dbReference>
<dbReference type="Pfam" id="PF00148">
    <property type="entry name" value="Oxidored_nitro"/>
    <property type="match status" value="1"/>
</dbReference>
<dbReference type="Pfam" id="PF08369">
    <property type="entry name" value="PCP_red"/>
    <property type="match status" value="1"/>
</dbReference>
<dbReference type="PIRSF" id="PIRSF000163">
    <property type="entry name" value="PCP_ChlB"/>
    <property type="match status" value="1"/>
</dbReference>
<dbReference type="SUPFAM" id="SSF53807">
    <property type="entry name" value="Helical backbone' metal receptor"/>
    <property type="match status" value="1"/>
</dbReference>
<proteinExistence type="inferred from homology"/>
<feature type="chain" id="PRO_1000133421" description="Light-independent protochlorophyllide reductase subunit B">
    <location>
        <begin position="1"/>
        <end position="508"/>
    </location>
</feature>
<feature type="active site" description="Proton donor" evidence="1">
    <location>
        <position position="294"/>
    </location>
</feature>
<feature type="binding site" evidence="1">
    <location>
        <position position="36"/>
    </location>
    <ligand>
        <name>[4Fe-4S] cluster</name>
        <dbReference type="ChEBI" id="CHEBI:49883"/>
        <note>ligand shared with heterodimeric partner</note>
    </ligand>
</feature>
<feature type="binding site" evidence="1">
    <location>
        <begin position="429"/>
        <end position="430"/>
    </location>
    <ligand>
        <name>substrate</name>
    </ligand>
</feature>
<evidence type="ECO:0000255" key="1">
    <source>
        <dbReference type="HAMAP-Rule" id="MF_00353"/>
    </source>
</evidence>
<comment type="function">
    <text evidence="1">Component of the dark-operative protochlorophyllide reductase (DPOR) that uses Mg-ATP and reduced ferredoxin to reduce ring D of protochlorophyllide (Pchlide) to form chlorophyllide a (Chlide). This reaction is light-independent. The NB-protein (ChlN-ChlB) is the catalytic component of the complex.</text>
</comment>
<comment type="catalytic activity">
    <reaction evidence="1">
        <text>chlorophyllide a + oxidized 2[4Fe-4S]-[ferredoxin] + 2 ADP + 2 phosphate = protochlorophyllide a + reduced 2[4Fe-4S]-[ferredoxin] + 2 ATP + 2 H2O</text>
        <dbReference type="Rhea" id="RHEA:28202"/>
        <dbReference type="Rhea" id="RHEA-COMP:10002"/>
        <dbReference type="Rhea" id="RHEA-COMP:10004"/>
        <dbReference type="ChEBI" id="CHEBI:15377"/>
        <dbReference type="ChEBI" id="CHEBI:30616"/>
        <dbReference type="ChEBI" id="CHEBI:33722"/>
        <dbReference type="ChEBI" id="CHEBI:33723"/>
        <dbReference type="ChEBI" id="CHEBI:43474"/>
        <dbReference type="ChEBI" id="CHEBI:83348"/>
        <dbReference type="ChEBI" id="CHEBI:83350"/>
        <dbReference type="ChEBI" id="CHEBI:456216"/>
        <dbReference type="EC" id="1.3.7.7"/>
    </reaction>
</comment>
<comment type="cofactor">
    <cofactor evidence="1">
        <name>[4Fe-4S] cluster</name>
        <dbReference type="ChEBI" id="CHEBI:49883"/>
    </cofactor>
    <text evidence="1">Binds 1 [4Fe-4S] cluster per heterodimer. The cluster is bound at the heterodimer interface by residues from both subunits.</text>
</comment>
<comment type="pathway">
    <text evidence="1">Porphyrin-containing compound metabolism; chlorophyll biosynthesis (light-independent).</text>
</comment>
<comment type="subunit">
    <text evidence="1">Protochlorophyllide reductase is composed of three subunits; ChlL, ChlN and ChlB. Forms a heterotetramer of two ChlB and two ChlN subunits.</text>
</comment>
<comment type="similarity">
    <text evidence="1">Belongs to the ChlB/BchB/BchZ family.</text>
</comment>